<feature type="chain" id="PRO_0000157768" description="Probable GTP-binding protein EngB">
    <location>
        <begin position="1"/>
        <end position="209"/>
    </location>
</feature>
<feature type="domain" description="EngB-type G" evidence="1">
    <location>
        <begin position="22"/>
        <end position="198"/>
    </location>
</feature>
<feature type="binding site" evidence="1">
    <location>
        <position position="37"/>
    </location>
    <ligand>
        <name>Mg(2+)</name>
        <dbReference type="ChEBI" id="CHEBI:18420"/>
    </ligand>
</feature>
<feature type="binding site" evidence="1">
    <location>
        <position position="59"/>
    </location>
    <ligand>
        <name>Mg(2+)</name>
        <dbReference type="ChEBI" id="CHEBI:18420"/>
    </ligand>
</feature>
<organism>
    <name type="scientific">Neisseria meningitidis serogroup B (strain ATCC BAA-335 / MC58)</name>
    <dbReference type="NCBI Taxonomy" id="122586"/>
    <lineage>
        <taxon>Bacteria</taxon>
        <taxon>Pseudomonadati</taxon>
        <taxon>Pseudomonadota</taxon>
        <taxon>Betaproteobacteria</taxon>
        <taxon>Neisseriales</taxon>
        <taxon>Neisseriaceae</taxon>
        <taxon>Neisseria</taxon>
    </lineage>
</organism>
<name>ENGB_NEIMB</name>
<reference key="1">
    <citation type="journal article" date="2000" name="Science">
        <title>Complete genome sequence of Neisseria meningitidis serogroup B strain MC58.</title>
        <authorList>
            <person name="Tettelin H."/>
            <person name="Saunders N.J."/>
            <person name="Heidelberg J.F."/>
            <person name="Jeffries A.C."/>
            <person name="Nelson K.E."/>
            <person name="Eisen J.A."/>
            <person name="Ketchum K.A."/>
            <person name="Hood D.W."/>
            <person name="Peden J.F."/>
            <person name="Dodson R.J."/>
            <person name="Nelson W.C."/>
            <person name="Gwinn M.L."/>
            <person name="DeBoy R.T."/>
            <person name="Peterson J.D."/>
            <person name="Hickey E.K."/>
            <person name="Haft D.H."/>
            <person name="Salzberg S.L."/>
            <person name="White O."/>
            <person name="Fleischmann R.D."/>
            <person name="Dougherty B.A."/>
            <person name="Mason T.M."/>
            <person name="Ciecko A."/>
            <person name="Parksey D.S."/>
            <person name="Blair E."/>
            <person name="Cittone H."/>
            <person name="Clark E.B."/>
            <person name="Cotton M.D."/>
            <person name="Utterback T.R."/>
            <person name="Khouri H.M."/>
            <person name="Qin H."/>
            <person name="Vamathevan J.J."/>
            <person name="Gill J."/>
            <person name="Scarlato V."/>
            <person name="Masignani V."/>
            <person name="Pizza M."/>
            <person name="Grandi G."/>
            <person name="Sun L."/>
            <person name="Smith H.O."/>
            <person name="Fraser C.M."/>
            <person name="Moxon E.R."/>
            <person name="Rappuoli R."/>
            <person name="Venter J.C."/>
        </authorList>
    </citation>
    <scope>NUCLEOTIDE SEQUENCE [LARGE SCALE GENOMIC DNA]</scope>
    <source>
        <strain>ATCC BAA-335 / MC58</strain>
    </source>
</reference>
<accession>Q9JY03</accession>
<dbReference type="EMBL" id="AE002098">
    <property type="protein sequence ID" value="AAF42143.1"/>
    <property type="status" value="ALT_INIT"/>
    <property type="molecule type" value="Genomic_DNA"/>
</dbReference>
<dbReference type="PIR" id="G81040">
    <property type="entry name" value="G81040"/>
</dbReference>
<dbReference type="RefSeq" id="NP_274803.1">
    <property type="nucleotide sequence ID" value="NC_003112.2"/>
</dbReference>
<dbReference type="RefSeq" id="WP_002248759.1">
    <property type="nucleotide sequence ID" value="NC_003112.2"/>
</dbReference>
<dbReference type="SMR" id="Q9JY03"/>
<dbReference type="FunCoup" id="Q9JY03">
    <property type="interactions" value="365"/>
</dbReference>
<dbReference type="STRING" id="122586.NMB1806"/>
<dbReference type="PaxDb" id="122586-NMB1806"/>
<dbReference type="KEGG" id="nme:NMB1806"/>
<dbReference type="PATRIC" id="fig|122586.8.peg.2296"/>
<dbReference type="HOGENOM" id="CLU_033732_1_1_4"/>
<dbReference type="InParanoid" id="Q9JY03"/>
<dbReference type="OrthoDB" id="9804921at2"/>
<dbReference type="Proteomes" id="UP000000425">
    <property type="component" value="Chromosome"/>
</dbReference>
<dbReference type="GO" id="GO:0005829">
    <property type="term" value="C:cytosol"/>
    <property type="evidence" value="ECO:0000318"/>
    <property type="project" value="GO_Central"/>
</dbReference>
<dbReference type="GO" id="GO:0005525">
    <property type="term" value="F:GTP binding"/>
    <property type="evidence" value="ECO:0007669"/>
    <property type="project" value="UniProtKB-UniRule"/>
</dbReference>
<dbReference type="GO" id="GO:0046872">
    <property type="term" value="F:metal ion binding"/>
    <property type="evidence" value="ECO:0007669"/>
    <property type="project" value="UniProtKB-KW"/>
</dbReference>
<dbReference type="GO" id="GO:0000917">
    <property type="term" value="P:division septum assembly"/>
    <property type="evidence" value="ECO:0007669"/>
    <property type="project" value="UniProtKB-KW"/>
</dbReference>
<dbReference type="CDD" id="cd01876">
    <property type="entry name" value="YihA_EngB"/>
    <property type="match status" value="1"/>
</dbReference>
<dbReference type="FunFam" id="3.40.50.300:FF:000098">
    <property type="entry name" value="Probable GTP-binding protein EngB"/>
    <property type="match status" value="1"/>
</dbReference>
<dbReference type="Gene3D" id="3.40.50.300">
    <property type="entry name" value="P-loop containing nucleotide triphosphate hydrolases"/>
    <property type="match status" value="1"/>
</dbReference>
<dbReference type="HAMAP" id="MF_00321">
    <property type="entry name" value="GTPase_EngB"/>
    <property type="match status" value="1"/>
</dbReference>
<dbReference type="InterPro" id="IPR030393">
    <property type="entry name" value="G_ENGB_dom"/>
</dbReference>
<dbReference type="InterPro" id="IPR006073">
    <property type="entry name" value="GTP-bd"/>
</dbReference>
<dbReference type="InterPro" id="IPR019987">
    <property type="entry name" value="GTP-bd_ribosome_bio_YsxC"/>
</dbReference>
<dbReference type="InterPro" id="IPR027417">
    <property type="entry name" value="P-loop_NTPase"/>
</dbReference>
<dbReference type="NCBIfam" id="TIGR03598">
    <property type="entry name" value="GTPase_YsxC"/>
    <property type="match status" value="1"/>
</dbReference>
<dbReference type="PANTHER" id="PTHR11649:SF13">
    <property type="entry name" value="ENGB-TYPE G DOMAIN-CONTAINING PROTEIN"/>
    <property type="match status" value="1"/>
</dbReference>
<dbReference type="PANTHER" id="PTHR11649">
    <property type="entry name" value="MSS1/TRME-RELATED GTP-BINDING PROTEIN"/>
    <property type="match status" value="1"/>
</dbReference>
<dbReference type="Pfam" id="PF01926">
    <property type="entry name" value="MMR_HSR1"/>
    <property type="match status" value="1"/>
</dbReference>
<dbReference type="SUPFAM" id="SSF52540">
    <property type="entry name" value="P-loop containing nucleoside triphosphate hydrolases"/>
    <property type="match status" value="1"/>
</dbReference>
<dbReference type="PROSITE" id="PS51706">
    <property type="entry name" value="G_ENGB"/>
    <property type="match status" value="1"/>
</dbReference>
<proteinExistence type="inferred from homology"/>
<evidence type="ECO:0000255" key="1">
    <source>
        <dbReference type="HAMAP-Rule" id="MF_00321"/>
    </source>
</evidence>
<evidence type="ECO:0000305" key="2"/>
<protein>
    <recommendedName>
        <fullName evidence="1">Probable GTP-binding protein EngB</fullName>
    </recommendedName>
</protein>
<keyword id="KW-0131">Cell cycle</keyword>
<keyword id="KW-0132">Cell division</keyword>
<keyword id="KW-0342">GTP-binding</keyword>
<keyword id="KW-0460">Magnesium</keyword>
<keyword id="KW-0479">Metal-binding</keyword>
<keyword id="KW-0547">Nucleotide-binding</keyword>
<keyword id="KW-1185">Reference proteome</keyword>
<keyword id="KW-0717">Septation</keyword>
<comment type="function">
    <text evidence="1">Necessary for normal cell division and for the maintenance of normal septation.</text>
</comment>
<comment type="cofactor">
    <cofactor evidence="1">
        <name>Mg(2+)</name>
        <dbReference type="ChEBI" id="CHEBI:18420"/>
    </cofactor>
</comment>
<comment type="similarity">
    <text evidence="1">Belongs to the TRAFAC class TrmE-Era-EngA-EngB-Septin-like GTPase superfamily. EngB GTPase family.</text>
</comment>
<comment type="sequence caution" evidence="2">
    <conflict type="erroneous initiation">
        <sequence resource="EMBL-CDS" id="AAF42143"/>
    </conflict>
</comment>
<gene>
    <name evidence="1" type="primary">engB</name>
    <name type="ordered locus">NMB1806</name>
</gene>
<sequence length="209" mass="23543">MNLFQNAKFFTTINHLKDLPDTPLEIAFVGRSNAGKSSAINTLTNHVRLAYVSKTPGRTQHINFFELQNGNFMVDLPGYGYAQVPEAVRAHWVNLLGDYLQQRKQLIGLVLIMDARHPLKELDIRMLDFFHTTGRPVHILLSKADKLSKNEQIKTLSQVKKLLKPYSDRQNISVQLFSSLKKQGIDEANRTVGSWLDAADAAASSPEEN</sequence>